<accession>O68967</accession>
<name>APCF_PICP2</name>
<proteinExistence type="evidence at protein level"/>
<feature type="chain" id="PRO_0000403179" description="Allophycocyanin subunit beta-18">
    <location>
        <begin position="1"/>
        <end position="169"/>
    </location>
</feature>
<feature type="binding site" description="covalent" evidence="2">
    <location>
        <position position="82"/>
    </location>
    <ligand>
        <name>(2R,3E)-phycocyanobilin</name>
        <dbReference type="ChEBI" id="CHEBI:85275"/>
    </ligand>
</feature>
<feature type="modified residue" description="N4-methylasparagine" evidence="1">
    <location>
        <position position="72"/>
    </location>
</feature>
<organism>
    <name type="scientific">Picosynechococcus sp. (strain ATCC 27264 / PCC 7002 / PR-6)</name>
    <name type="common">Agmenellum quadruplicatum</name>
    <dbReference type="NCBI Taxonomy" id="32049"/>
    <lineage>
        <taxon>Bacteria</taxon>
        <taxon>Bacillati</taxon>
        <taxon>Cyanobacteriota</taxon>
        <taxon>Cyanophyceae</taxon>
        <taxon>Oscillatoriophycideae</taxon>
        <taxon>Chroococcales</taxon>
        <taxon>Geminocystaceae</taxon>
        <taxon>Picosynechococcus</taxon>
    </lineage>
</organism>
<comment type="function">
    <text evidence="1">A variant beta-allophycocyanin (AP) which forms a complex with ApcE, a phycobilisome terminal emitter that influences energy transfer to photosystem II.</text>
</comment>
<comment type="subunit">
    <text evidence="1">Heterodimer of ApcE and this beta chain.</text>
</comment>
<comment type="subcellular location">
    <subcellularLocation>
        <location evidence="1">Cellular thylakoid membrane</location>
        <topology evidence="1">Peripheral membrane protein</topology>
        <orientation evidence="1">Cytoplasmic side</orientation>
    </subcellularLocation>
</comment>
<comment type="PTM">
    <text>Contains one covalently linked bilin chromophore. The chromophore is added by phycocyanobilin lyase CpcUS.</text>
</comment>
<comment type="similarity">
    <text evidence="2">Belongs to the phycobiliprotein family.</text>
</comment>
<dbReference type="EMBL" id="AF059338">
    <property type="protein sequence ID" value="AAC14717.1"/>
    <property type="molecule type" value="Genomic_DNA"/>
</dbReference>
<dbReference type="EMBL" id="CP000951">
    <property type="protein sequence ID" value="ACA99621.1"/>
    <property type="molecule type" value="Genomic_DNA"/>
</dbReference>
<dbReference type="PDB" id="7EXT">
    <property type="method" value="EM"/>
    <property type="resolution" value="3.50 A"/>
    <property type="chains" value="Q3/g3=1-169"/>
</dbReference>
<dbReference type="PDBsum" id="7EXT"/>
<dbReference type="SMR" id="O68967"/>
<dbReference type="STRING" id="32049.SYNPCC7002_A1631"/>
<dbReference type="KEGG" id="syp:SYNPCC7002_A1631"/>
<dbReference type="eggNOG" id="ENOG502Z8IM">
    <property type="taxonomic scope" value="Bacteria"/>
</dbReference>
<dbReference type="HOGENOM" id="CLU_104219_2_0_3"/>
<dbReference type="Proteomes" id="UP000001688">
    <property type="component" value="Chromosome"/>
</dbReference>
<dbReference type="GO" id="GO:0030089">
    <property type="term" value="C:phycobilisome"/>
    <property type="evidence" value="ECO:0007669"/>
    <property type="project" value="UniProtKB-KW"/>
</dbReference>
<dbReference type="GO" id="GO:0031676">
    <property type="term" value="C:plasma membrane-derived thylakoid membrane"/>
    <property type="evidence" value="ECO:0007669"/>
    <property type="project" value="UniProtKB-SubCell"/>
</dbReference>
<dbReference type="GO" id="GO:0015979">
    <property type="term" value="P:photosynthesis"/>
    <property type="evidence" value="ECO:0007669"/>
    <property type="project" value="UniProtKB-KW"/>
</dbReference>
<dbReference type="CDD" id="cd12126">
    <property type="entry name" value="APC_beta"/>
    <property type="match status" value="1"/>
</dbReference>
<dbReference type="Gene3D" id="1.10.490.20">
    <property type="entry name" value="Phycocyanins"/>
    <property type="match status" value="1"/>
</dbReference>
<dbReference type="InterPro" id="IPR006245">
    <property type="entry name" value="Allophycocyanin_b"/>
</dbReference>
<dbReference type="InterPro" id="IPR009050">
    <property type="entry name" value="Globin-like_sf"/>
</dbReference>
<dbReference type="InterPro" id="IPR012128">
    <property type="entry name" value="Phycobilisome_asu/bsu"/>
</dbReference>
<dbReference type="InterPro" id="IPR038719">
    <property type="entry name" value="Phycobilisome_asu/bsu_sf"/>
</dbReference>
<dbReference type="NCBIfam" id="TIGR01337">
    <property type="entry name" value="apcB"/>
    <property type="match status" value="1"/>
</dbReference>
<dbReference type="PANTHER" id="PTHR34011:SF3">
    <property type="entry name" value="ALLOPHYCOCYANIN BETA CHAIN"/>
    <property type="match status" value="1"/>
</dbReference>
<dbReference type="PANTHER" id="PTHR34011">
    <property type="entry name" value="PHYCOBILISOME 32.1 KDA LINKER POLYPEPTIDE, PHYCOCYANIN-ASSOCIATED, ROD 2-RELATED"/>
    <property type="match status" value="1"/>
</dbReference>
<dbReference type="Pfam" id="PF00502">
    <property type="entry name" value="Phycobilisome"/>
    <property type="match status" value="1"/>
</dbReference>
<dbReference type="PIRSF" id="PIRSF000081">
    <property type="entry name" value="Phycocyanin"/>
    <property type="match status" value="1"/>
</dbReference>
<dbReference type="SUPFAM" id="SSF46458">
    <property type="entry name" value="Globin-like"/>
    <property type="match status" value="1"/>
</dbReference>
<keyword id="KW-0002">3D-structure</keyword>
<keyword id="KW-0042">Antenna complex</keyword>
<keyword id="KW-0089">Bile pigment</keyword>
<keyword id="KW-0157">Chromophore</keyword>
<keyword id="KW-0249">Electron transport</keyword>
<keyword id="KW-0472">Membrane</keyword>
<keyword id="KW-0488">Methylation</keyword>
<keyword id="KW-0602">Photosynthesis</keyword>
<keyword id="KW-0605">Phycobilisome</keyword>
<keyword id="KW-1185">Reference proteome</keyword>
<keyword id="KW-0793">Thylakoid</keyword>
<keyword id="KW-0813">Transport</keyword>
<reference key="1">
    <citation type="submission" date="1998-04" db="EMBL/GenBank/DDBJ databases">
        <title>Cloning and characterization of the apcF gene of Synechococcus sp. PCC 7002.</title>
        <authorList>
            <person name="Zhou J."/>
            <person name="Stirewalt V.L."/>
            <person name="Bryant D.A."/>
        </authorList>
    </citation>
    <scope>NUCLEOTIDE SEQUENCE [GENOMIC DNA]</scope>
    <source>
        <strain>ATCC 27264 / PCC 7002 / PR-6</strain>
    </source>
</reference>
<reference key="2">
    <citation type="submission" date="2008-02" db="EMBL/GenBank/DDBJ databases">
        <title>Complete sequence of Synechococcus sp. PCC 7002.</title>
        <authorList>
            <person name="Li T."/>
            <person name="Zhao J."/>
            <person name="Zhao C."/>
            <person name="Liu Z."/>
            <person name="Zhao F."/>
            <person name="Marquardt J."/>
            <person name="Nomura C.T."/>
            <person name="Persson S."/>
            <person name="Detter J.C."/>
            <person name="Richardson P.M."/>
            <person name="Lanz C."/>
            <person name="Schuster S.C."/>
            <person name="Wang J."/>
            <person name="Li S."/>
            <person name="Huang X."/>
            <person name="Cai T."/>
            <person name="Yu Z."/>
            <person name="Luo J."/>
            <person name="Zhao J."/>
            <person name="Bryant D.A."/>
        </authorList>
    </citation>
    <scope>NUCLEOTIDE SEQUENCE [LARGE SCALE GENOMIC DNA]</scope>
    <source>
        <strain>ATCC 27264 / PCC 7002 / PR-6</strain>
    </source>
</reference>
<reference key="3">
    <citation type="journal article" date="2010" name="Appl. Environ. Microbiol.">
        <title>Biosynthesis of cyanobacterial phycobiliproteins in Escherichia coli: chromophorylation efficiency and specificity of all bilin lyases from Synechococcus sp. strain PCC 7002.</title>
        <authorList>
            <person name="Biswas A."/>
            <person name="Vasquez Y.M."/>
            <person name="Dragomani T.M."/>
            <person name="Kronfel M.L."/>
            <person name="Williams S.R."/>
            <person name="Alvey R.M."/>
            <person name="Bryant D.A."/>
            <person name="Schluchter W.M."/>
        </authorList>
    </citation>
    <scope>CHROMOPHORE ATTACHMENT</scope>
    <source>
        <strain>ATCC 27264 / PCC 7002 / PR-6</strain>
    </source>
</reference>
<evidence type="ECO:0000250" key="1"/>
<evidence type="ECO:0000305" key="2"/>
<protein>
    <recommendedName>
        <fullName>Allophycocyanin subunit beta-18</fullName>
        <shortName>Allophycocyanin subunit B18</shortName>
    </recommendedName>
</protein>
<gene>
    <name type="primary">apcF</name>
    <name type="ordered locus">SYNPCC7002_A1631</name>
</gene>
<sequence>MRDAVTSLIRNYDTTGRYFDRDAIESLKDYFASGNDRITVAAMINSQSAEIVKAAANSLFEAVPELLLAGGNAYTTRRFSACLRDMDYYLRYGTYALIAGDMDVLNERVLQGLRETYNSLGVPIAPTVRGIQFLKDAIKEMAAAAGIANTAFIDEPFDHMTRELSEVDL</sequence>